<gene>
    <name type="primary">MATA1</name>
    <name type="synonym">a1</name>
    <name type="ordered locus">KLLA0C03135g</name>
</gene>
<gene>
    <name type="primary">HMRA1</name>
    <name type="ordered locus">KLLA0B14553g</name>
</gene>
<dbReference type="EMBL" id="AF195067">
    <property type="protein sequence ID" value="AAG21094.1"/>
    <property type="molecule type" value="Genomic_DNA"/>
</dbReference>
<dbReference type="EMBL" id="AJ617304">
    <property type="protein sequence ID" value="CAE84411.1"/>
    <property type="molecule type" value="Genomic_DNA"/>
</dbReference>
<dbReference type="EMBL" id="CR382122">
    <property type="protein sequence ID" value="CAH02572.1"/>
    <property type="molecule type" value="Genomic_DNA"/>
</dbReference>
<dbReference type="EMBL" id="CR382123">
    <property type="protein sequence ID" value="CAH01188.1"/>
    <property type="molecule type" value="Genomic_DNA"/>
</dbReference>
<dbReference type="RefSeq" id="XP_452179.1">
    <property type="nucleotide sequence ID" value="XM_452179.1"/>
</dbReference>
<dbReference type="RefSeq" id="XP_452337.1">
    <property type="nucleotide sequence ID" value="XM_452337.1"/>
</dbReference>
<dbReference type="SMR" id="Q9HG12"/>
<dbReference type="STRING" id="284590.Q9HG12"/>
<dbReference type="PaxDb" id="284590-Q9HG12"/>
<dbReference type="KEGG" id="kla:KLLA0_B14553g"/>
<dbReference type="KEGG" id="kla:KLLA0_C03135g"/>
<dbReference type="eggNOG" id="ENOG502SCEX">
    <property type="taxonomic scope" value="Eukaryota"/>
</dbReference>
<dbReference type="HOGENOM" id="CLU_1214931_0_0_1"/>
<dbReference type="InParanoid" id="Q9HG12"/>
<dbReference type="Proteomes" id="UP000000598">
    <property type="component" value="Chromosome B"/>
</dbReference>
<dbReference type="Proteomes" id="UP000000598">
    <property type="component" value="Chromosome C"/>
</dbReference>
<dbReference type="GO" id="GO:0005634">
    <property type="term" value="C:nucleus"/>
    <property type="evidence" value="ECO:0007669"/>
    <property type="project" value="UniProtKB-SubCell"/>
</dbReference>
<dbReference type="GO" id="GO:0003677">
    <property type="term" value="F:DNA binding"/>
    <property type="evidence" value="ECO:0007669"/>
    <property type="project" value="UniProtKB-KW"/>
</dbReference>
<dbReference type="GO" id="GO:0000981">
    <property type="term" value="F:DNA-binding transcription factor activity, RNA polymerase II-specific"/>
    <property type="evidence" value="ECO:0007669"/>
    <property type="project" value="InterPro"/>
</dbReference>
<dbReference type="CDD" id="cd00086">
    <property type="entry name" value="homeodomain"/>
    <property type="match status" value="1"/>
</dbReference>
<dbReference type="Gene3D" id="1.10.10.60">
    <property type="entry name" value="Homeodomain-like"/>
    <property type="match status" value="1"/>
</dbReference>
<dbReference type="InterPro" id="IPR050460">
    <property type="entry name" value="Distal-less_Homeobox_TF"/>
</dbReference>
<dbReference type="InterPro" id="IPR001356">
    <property type="entry name" value="HD"/>
</dbReference>
<dbReference type="InterPro" id="IPR017970">
    <property type="entry name" value="Homeobox_CS"/>
</dbReference>
<dbReference type="InterPro" id="IPR009057">
    <property type="entry name" value="Homeodomain-like_sf"/>
</dbReference>
<dbReference type="PANTHER" id="PTHR24327:SF85">
    <property type="entry name" value="ADL394CP"/>
    <property type="match status" value="1"/>
</dbReference>
<dbReference type="PANTHER" id="PTHR24327">
    <property type="entry name" value="HOMEOBOX PROTEIN"/>
    <property type="match status" value="1"/>
</dbReference>
<dbReference type="Pfam" id="PF00046">
    <property type="entry name" value="Homeodomain"/>
    <property type="match status" value="1"/>
</dbReference>
<dbReference type="SMART" id="SM00389">
    <property type="entry name" value="HOX"/>
    <property type="match status" value="1"/>
</dbReference>
<dbReference type="SUPFAM" id="SSF46689">
    <property type="entry name" value="Homeodomain-like"/>
    <property type="match status" value="1"/>
</dbReference>
<dbReference type="PROSITE" id="PS00027">
    <property type="entry name" value="HOMEOBOX_1"/>
    <property type="match status" value="1"/>
</dbReference>
<dbReference type="PROSITE" id="PS50071">
    <property type="entry name" value="HOMEOBOX_2"/>
    <property type="match status" value="1"/>
</dbReference>
<proteinExistence type="inferred from homology"/>
<keyword id="KW-0238">DNA-binding</keyword>
<keyword id="KW-0371">Homeobox</keyword>
<keyword id="KW-0539">Nucleus</keyword>
<keyword id="KW-1185">Reference proteome</keyword>
<keyword id="KW-0678">Repressor</keyword>
<keyword id="KW-0804">Transcription</keyword>
<keyword id="KW-0805">Transcription regulation</keyword>
<name>MATA1_KLULA</name>
<protein>
    <recommendedName>
        <fullName>Mating-type protein A1</fullName>
    </recommendedName>
    <alternativeName>
        <fullName>A1 transcription factor</fullName>
    </alternativeName>
    <alternativeName>
        <fullName>MATa1 protein</fullName>
    </alternativeName>
</protein>
<sequence>MCDNDMADIQSKLSSFCEEIRALALKEGYNLEGDKSPSSKPYFMSWPKEIDVNHPNFAFFTKLQFQYDKSLETILNSCYLQELQLDPTRIIETLQQHFNNSILRYADIENISDVKDESPMSFDTEHECTDTSEDISDKSEISSTNSDNPIQNCYPTYKRSFIKHESRGILEKIFKVKQCPNTSERLYIAQKLDLTPSQVRIWFTNKRMRAKKHTTGKGTKRKSKKYPS</sequence>
<reference key="1">
    <citation type="journal article" date="2000" name="Genetics">
        <title>Kluyveromyces lactis Sir2p regulates cation sensitivity and maintains a specialized chromatin structure at the cryptic alpha-locus.</title>
        <authorList>
            <person name="Aastroem S.U."/>
            <person name="Kegel A."/>
            <person name="Sjoestrand J.O.O."/>
            <person name="Rine J."/>
        </authorList>
    </citation>
    <scope>NUCLEOTIDE SEQUENCE [GENOMIC DNA]</scope>
</reference>
<reference key="2">
    <citation type="journal article" date="2004" name="Proc. Natl. Acad. Sci. U.S.A.">
        <title>Evolution of the MAT locus and its Ho endonuclease in yeast species.</title>
        <authorList>
            <person name="Butler G."/>
            <person name="Kenny C."/>
            <person name="Fagan A."/>
            <person name="Kurischko C."/>
            <person name="Gaillardin C."/>
            <person name="Wolfe K.H."/>
        </authorList>
    </citation>
    <scope>NUCLEOTIDE SEQUENCE [GENOMIC DNA]</scope>
    <source>
        <strain>ATCC 76492 / CBS 2359/152 / CLIB 210</strain>
    </source>
</reference>
<reference key="3">
    <citation type="journal article" date="2004" name="Nature">
        <title>Genome evolution in yeasts.</title>
        <authorList>
            <person name="Dujon B."/>
            <person name="Sherman D."/>
            <person name="Fischer G."/>
            <person name="Durrens P."/>
            <person name="Casaregola S."/>
            <person name="Lafontaine I."/>
            <person name="de Montigny J."/>
            <person name="Marck C."/>
            <person name="Neuveglise C."/>
            <person name="Talla E."/>
            <person name="Goffard N."/>
            <person name="Frangeul L."/>
            <person name="Aigle M."/>
            <person name="Anthouard V."/>
            <person name="Babour A."/>
            <person name="Barbe V."/>
            <person name="Barnay S."/>
            <person name="Blanchin S."/>
            <person name="Beckerich J.-M."/>
            <person name="Beyne E."/>
            <person name="Bleykasten C."/>
            <person name="Boisrame A."/>
            <person name="Boyer J."/>
            <person name="Cattolico L."/>
            <person name="Confanioleri F."/>
            <person name="de Daruvar A."/>
            <person name="Despons L."/>
            <person name="Fabre E."/>
            <person name="Fairhead C."/>
            <person name="Ferry-Dumazet H."/>
            <person name="Groppi A."/>
            <person name="Hantraye F."/>
            <person name="Hennequin C."/>
            <person name="Jauniaux N."/>
            <person name="Joyet P."/>
            <person name="Kachouri R."/>
            <person name="Kerrest A."/>
            <person name="Koszul R."/>
            <person name="Lemaire M."/>
            <person name="Lesur I."/>
            <person name="Ma L."/>
            <person name="Muller H."/>
            <person name="Nicaud J.-M."/>
            <person name="Nikolski M."/>
            <person name="Oztas S."/>
            <person name="Ozier-Kalogeropoulos O."/>
            <person name="Pellenz S."/>
            <person name="Potier S."/>
            <person name="Richard G.-F."/>
            <person name="Straub M.-L."/>
            <person name="Suleau A."/>
            <person name="Swennen D."/>
            <person name="Tekaia F."/>
            <person name="Wesolowski-Louvel M."/>
            <person name="Westhof E."/>
            <person name="Wirth B."/>
            <person name="Zeniou-Meyer M."/>
            <person name="Zivanovic Y."/>
            <person name="Bolotin-Fukuhara M."/>
            <person name="Thierry A."/>
            <person name="Bouchier C."/>
            <person name="Caudron B."/>
            <person name="Scarpelli C."/>
            <person name="Gaillardin C."/>
            <person name="Weissenbach J."/>
            <person name="Wincker P."/>
            <person name="Souciet J.-L."/>
        </authorList>
    </citation>
    <scope>NUCLEOTIDE SEQUENCE [LARGE SCALE GENOMIC DNA]</scope>
    <source>
        <strain>ATCC 8585 / CBS 2359 / DSM 70799 / NBRC 1267 / NRRL Y-1140 / WM37</strain>
    </source>
</reference>
<feature type="chain" id="PRO_0000049179" description="Mating-type protein A1">
    <location>
        <begin position="1"/>
        <end position="228"/>
    </location>
</feature>
<feature type="DNA-binding region" description="Homeobox" evidence="2">
    <location>
        <begin position="155"/>
        <end position="214"/>
    </location>
</feature>
<feature type="region of interest" description="Disordered" evidence="3">
    <location>
        <begin position="120"/>
        <end position="149"/>
    </location>
</feature>
<feature type="compositionally biased region" description="Basic and acidic residues" evidence="3">
    <location>
        <begin position="120"/>
        <end position="140"/>
    </location>
</feature>
<evidence type="ECO:0000250" key="1"/>
<evidence type="ECO:0000255" key="2">
    <source>
        <dbReference type="PROSITE-ProRule" id="PRU00108"/>
    </source>
</evidence>
<evidence type="ECO:0000256" key="3">
    <source>
        <dbReference type="SAM" id="MobiDB-lite"/>
    </source>
</evidence>
<evidence type="ECO:0000305" key="4"/>
<comment type="function">
    <text evidence="1">Mating type proteins are sequence specific DNA-binding proteins that act as master switches in yeast differentiation by controlling gene expression in a cell type-specific fashion. Transcriptional corepressor that acts in conjunction with ALPHA2 to repress transcription of haploid-specific genes (By similarity).</text>
</comment>
<comment type="subunit">
    <text evidence="1">Forms a heterodimer with ALPHA2.</text>
</comment>
<comment type="subcellular location">
    <subcellularLocation>
        <location evidence="2">Nucleus</location>
    </subcellularLocation>
</comment>
<comment type="miscellaneous">
    <text>There are three genetic loci for mating type genes in K.lactis. MAT is the expression locus that determines the mating type of the cell, whereas HML (containing HMLALPHA1, HMLALPHA2 and HMLALPHA3) and HMR (containing HMRA1 and HMRA2) represent silenced repositories of mating type information. The mating type is determined by the MAT locus, which contains either a copy of HML or of HMR. Diploid cells are usually heterozygous for the MAT locus.</text>
</comment>
<comment type="similarity">
    <text evidence="4">Belongs to the MATA1 family.</text>
</comment>
<accession>Q9HG12</accession>
<accession>Q6CV60</accession>
<organism>
    <name type="scientific">Kluyveromyces lactis (strain ATCC 8585 / CBS 2359 / DSM 70799 / NBRC 1267 / NRRL Y-1140 / WM37)</name>
    <name type="common">Yeast</name>
    <name type="synonym">Candida sphaerica</name>
    <dbReference type="NCBI Taxonomy" id="284590"/>
    <lineage>
        <taxon>Eukaryota</taxon>
        <taxon>Fungi</taxon>
        <taxon>Dikarya</taxon>
        <taxon>Ascomycota</taxon>
        <taxon>Saccharomycotina</taxon>
        <taxon>Saccharomycetes</taxon>
        <taxon>Saccharomycetales</taxon>
        <taxon>Saccharomycetaceae</taxon>
        <taxon>Kluyveromyces</taxon>
    </lineage>
</organism>